<comment type="function">
    <text evidence="1">Catalyzes the acyloin condensation reaction between C atoms 2 and 3 of pyruvate and glyceraldehyde 3-phosphate to yield 1-deoxy-D-xylulose-5-phosphate (DXP).</text>
</comment>
<comment type="catalytic activity">
    <reaction evidence="1">
        <text>D-glyceraldehyde 3-phosphate + pyruvate + H(+) = 1-deoxy-D-xylulose 5-phosphate + CO2</text>
        <dbReference type="Rhea" id="RHEA:12605"/>
        <dbReference type="ChEBI" id="CHEBI:15361"/>
        <dbReference type="ChEBI" id="CHEBI:15378"/>
        <dbReference type="ChEBI" id="CHEBI:16526"/>
        <dbReference type="ChEBI" id="CHEBI:57792"/>
        <dbReference type="ChEBI" id="CHEBI:59776"/>
        <dbReference type="EC" id="2.2.1.7"/>
    </reaction>
</comment>
<comment type="cofactor">
    <cofactor evidence="1">
        <name>Mg(2+)</name>
        <dbReference type="ChEBI" id="CHEBI:18420"/>
    </cofactor>
    <text evidence="1">Binds 1 Mg(2+) ion per subunit.</text>
</comment>
<comment type="cofactor">
    <cofactor evidence="1">
        <name>thiamine diphosphate</name>
        <dbReference type="ChEBI" id="CHEBI:58937"/>
    </cofactor>
    <text evidence="1">Binds 1 thiamine pyrophosphate per subunit.</text>
</comment>
<comment type="pathway">
    <text evidence="1">Metabolic intermediate biosynthesis; 1-deoxy-D-xylulose 5-phosphate biosynthesis; 1-deoxy-D-xylulose 5-phosphate from D-glyceraldehyde 3-phosphate and pyruvate: step 1/1.</text>
</comment>
<comment type="subunit">
    <text evidence="1">Homodimer.</text>
</comment>
<comment type="similarity">
    <text evidence="1">Belongs to the transketolase family. DXPS subfamily.</text>
</comment>
<comment type="caution">
    <text evidence="2">Compared to other DXS it lacks a domain of about 20 residues between positions 208 and 209.</text>
</comment>
<keyword id="KW-0414">Isoprene biosynthesis</keyword>
<keyword id="KW-0460">Magnesium</keyword>
<keyword id="KW-0479">Metal-binding</keyword>
<keyword id="KW-0784">Thiamine biosynthesis</keyword>
<keyword id="KW-0786">Thiamine pyrophosphate</keyword>
<keyword id="KW-0808">Transferase</keyword>
<gene>
    <name evidence="1" type="primary">dxs</name>
    <name type="ordered locus">BUsg_448</name>
</gene>
<name>DXS_BUCAP</name>
<feature type="chain" id="PRO_0000189095" description="1-deoxy-D-xylulose-5-phosphate synthase">
    <location>
        <begin position="1"/>
        <end position="585"/>
    </location>
</feature>
<feature type="binding site" evidence="1">
    <location>
        <position position="80"/>
    </location>
    <ligand>
        <name>thiamine diphosphate</name>
        <dbReference type="ChEBI" id="CHEBI:58937"/>
    </ligand>
</feature>
<feature type="binding site" evidence="1">
    <location>
        <begin position="121"/>
        <end position="123"/>
    </location>
    <ligand>
        <name>thiamine diphosphate</name>
        <dbReference type="ChEBI" id="CHEBI:58937"/>
    </ligand>
</feature>
<feature type="binding site" evidence="1">
    <location>
        <position position="152"/>
    </location>
    <ligand>
        <name>Mg(2+)</name>
        <dbReference type="ChEBI" id="CHEBI:18420"/>
    </ligand>
</feature>
<feature type="binding site" evidence="1">
    <location>
        <begin position="153"/>
        <end position="154"/>
    </location>
    <ligand>
        <name>thiamine diphosphate</name>
        <dbReference type="ChEBI" id="CHEBI:58937"/>
    </ligand>
</feature>
<feature type="binding site" evidence="1">
    <location>
        <position position="181"/>
    </location>
    <ligand>
        <name>Mg(2+)</name>
        <dbReference type="ChEBI" id="CHEBI:18420"/>
    </ligand>
</feature>
<feature type="binding site" evidence="1">
    <location>
        <position position="181"/>
    </location>
    <ligand>
        <name>thiamine diphosphate</name>
        <dbReference type="ChEBI" id="CHEBI:58937"/>
    </ligand>
</feature>
<feature type="binding site" evidence="1">
    <location>
        <position position="259"/>
    </location>
    <ligand>
        <name>thiamine diphosphate</name>
        <dbReference type="ChEBI" id="CHEBI:58937"/>
    </ligand>
</feature>
<feature type="binding site" evidence="1">
    <location>
        <position position="334"/>
    </location>
    <ligand>
        <name>thiamine diphosphate</name>
        <dbReference type="ChEBI" id="CHEBI:58937"/>
    </ligand>
</feature>
<dbReference type="EC" id="2.2.1.7" evidence="1"/>
<dbReference type="EMBL" id="AE013218">
    <property type="protein sequence ID" value="AAM67991.1"/>
    <property type="molecule type" value="Genomic_DNA"/>
</dbReference>
<dbReference type="RefSeq" id="WP_011053958.1">
    <property type="nucleotide sequence ID" value="NC_004061.1"/>
</dbReference>
<dbReference type="SMR" id="Q8K9A1"/>
<dbReference type="STRING" id="198804.BUsg_448"/>
<dbReference type="GeneID" id="93003919"/>
<dbReference type="KEGG" id="bas:BUsg_448"/>
<dbReference type="eggNOG" id="COG1154">
    <property type="taxonomic scope" value="Bacteria"/>
</dbReference>
<dbReference type="HOGENOM" id="CLU_009227_1_4_6"/>
<dbReference type="UniPathway" id="UPA00064">
    <property type="reaction ID" value="UER00091"/>
</dbReference>
<dbReference type="Proteomes" id="UP000000416">
    <property type="component" value="Chromosome"/>
</dbReference>
<dbReference type="GO" id="GO:0005829">
    <property type="term" value="C:cytosol"/>
    <property type="evidence" value="ECO:0007669"/>
    <property type="project" value="TreeGrafter"/>
</dbReference>
<dbReference type="GO" id="GO:0008661">
    <property type="term" value="F:1-deoxy-D-xylulose-5-phosphate synthase activity"/>
    <property type="evidence" value="ECO:0007669"/>
    <property type="project" value="UniProtKB-UniRule"/>
</dbReference>
<dbReference type="GO" id="GO:0000287">
    <property type="term" value="F:magnesium ion binding"/>
    <property type="evidence" value="ECO:0007669"/>
    <property type="project" value="UniProtKB-UniRule"/>
</dbReference>
<dbReference type="GO" id="GO:0030976">
    <property type="term" value="F:thiamine pyrophosphate binding"/>
    <property type="evidence" value="ECO:0007669"/>
    <property type="project" value="UniProtKB-UniRule"/>
</dbReference>
<dbReference type="GO" id="GO:0052865">
    <property type="term" value="P:1-deoxy-D-xylulose 5-phosphate biosynthetic process"/>
    <property type="evidence" value="ECO:0007669"/>
    <property type="project" value="UniProtKB-UniPathway"/>
</dbReference>
<dbReference type="GO" id="GO:0019288">
    <property type="term" value="P:isopentenyl diphosphate biosynthetic process, methylerythritol 4-phosphate pathway"/>
    <property type="evidence" value="ECO:0007669"/>
    <property type="project" value="TreeGrafter"/>
</dbReference>
<dbReference type="GO" id="GO:0016114">
    <property type="term" value="P:terpenoid biosynthetic process"/>
    <property type="evidence" value="ECO:0007669"/>
    <property type="project" value="UniProtKB-UniRule"/>
</dbReference>
<dbReference type="GO" id="GO:0009228">
    <property type="term" value="P:thiamine biosynthetic process"/>
    <property type="evidence" value="ECO:0007669"/>
    <property type="project" value="UniProtKB-UniRule"/>
</dbReference>
<dbReference type="CDD" id="cd02007">
    <property type="entry name" value="TPP_DXS"/>
    <property type="match status" value="1"/>
</dbReference>
<dbReference type="CDD" id="cd07033">
    <property type="entry name" value="TPP_PYR_DXS_TK_like"/>
    <property type="match status" value="1"/>
</dbReference>
<dbReference type="FunFam" id="3.40.50.920:FF:000002">
    <property type="entry name" value="1-deoxy-D-xylulose-5-phosphate synthase"/>
    <property type="match status" value="1"/>
</dbReference>
<dbReference type="FunFam" id="3.40.50.970:FF:000005">
    <property type="entry name" value="1-deoxy-D-xylulose-5-phosphate synthase"/>
    <property type="match status" value="1"/>
</dbReference>
<dbReference type="FunFam" id="3.40.50.970:FF:000008">
    <property type="entry name" value="1-deoxy-D-xylulose-5-phosphate synthase"/>
    <property type="match status" value="1"/>
</dbReference>
<dbReference type="Gene3D" id="3.40.50.920">
    <property type="match status" value="1"/>
</dbReference>
<dbReference type="Gene3D" id="3.40.50.970">
    <property type="match status" value="2"/>
</dbReference>
<dbReference type="HAMAP" id="MF_00315">
    <property type="entry name" value="DXP_synth"/>
    <property type="match status" value="1"/>
</dbReference>
<dbReference type="InterPro" id="IPR005477">
    <property type="entry name" value="Dxylulose-5-P_synthase"/>
</dbReference>
<dbReference type="InterPro" id="IPR029061">
    <property type="entry name" value="THDP-binding"/>
</dbReference>
<dbReference type="InterPro" id="IPR009014">
    <property type="entry name" value="Transketo_C/PFOR_II"/>
</dbReference>
<dbReference type="InterPro" id="IPR005475">
    <property type="entry name" value="Transketolase-like_Pyr-bd"/>
</dbReference>
<dbReference type="InterPro" id="IPR020826">
    <property type="entry name" value="Transketolase_BS"/>
</dbReference>
<dbReference type="InterPro" id="IPR033248">
    <property type="entry name" value="Transketolase_C"/>
</dbReference>
<dbReference type="NCBIfam" id="TIGR00204">
    <property type="entry name" value="dxs"/>
    <property type="match status" value="1"/>
</dbReference>
<dbReference type="NCBIfam" id="NF003933">
    <property type="entry name" value="PRK05444.2-2"/>
    <property type="match status" value="1"/>
</dbReference>
<dbReference type="PANTHER" id="PTHR43322">
    <property type="entry name" value="1-D-DEOXYXYLULOSE 5-PHOSPHATE SYNTHASE-RELATED"/>
    <property type="match status" value="1"/>
</dbReference>
<dbReference type="PANTHER" id="PTHR43322:SF5">
    <property type="entry name" value="1-DEOXY-D-XYLULOSE-5-PHOSPHATE SYNTHASE, CHLOROPLASTIC"/>
    <property type="match status" value="1"/>
</dbReference>
<dbReference type="Pfam" id="PF13292">
    <property type="entry name" value="DXP_synthase_N"/>
    <property type="match status" value="1"/>
</dbReference>
<dbReference type="Pfam" id="PF02779">
    <property type="entry name" value="Transket_pyr"/>
    <property type="match status" value="1"/>
</dbReference>
<dbReference type="Pfam" id="PF02780">
    <property type="entry name" value="Transketolase_C"/>
    <property type="match status" value="1"/>
</dbReference>
<dbReference type="SMART" id="SM00861">
    <property type="entry name" value="Transket_pyr"/>
    <property type="match status" value="1"/>
</dbReference>
<dbReference type="SUPFAM" id="SSF52518">
    <property type="entry name" value="Thiamin diphosphate-binding fold (THDP-binding)"/>
    <property type="match status" value="2"/>
</dbReference>
<dbReference type="SUPFAM" id="SSF52922">
    <property type="entry name" value="TK C-terminal domain-like"/>
    <property type="match status" value="1"/>
</dbReference>
<dbReference type="PROSITE" id="PS00802">
    <property type="entry name" value="TRANSKETOLASE_2"/>
    <property type="match status" value="1"/>
</dbReference>
<reference key="1">
    <citation type="journal article" date="2002" name="Science">
        <title>50 million years of genomic stasis in endosymbiotic bacteria.</title>
        <authorList>
            <person name="Tamas I."/>
            <person name="Klasson L."/>
            <person name="Canbaeck B."/>
            <person name="Naeslund A.K."/>
            <person name="Eriksson A.-S."/>
            <person name="Wernegreen J.J."/>
            <person name="Sandstroem J.P."/>
            <person name="Moran N.A."/>
            <person name="Andersson S.G.E."/>
        </authorList>
    </citation>
    <scope>NUCLEOTIDE SEQUENCE [LARGE SCALE GENOMIC DNA]</scope>
    <source>
        <strain>Sg</strain>
    </source>
</reference>
<protein>
    <recommendedName>
        <fullName evidence="1">1-deoxy-D-xylulose-5-phosphate synthase</fullName>
        <ecNumber evidence="1">2.2.1.7</ecNumber>
    </recommendedName>
    <alternativeName>
        <fullName evidence="1">1-deoxyxylulose-5-phosphate synthase</fullName>
        <shortName evidence="1">DXP synthase</shortName>
        <shortName evidence="1">DXPS</shortName>
    </alternativeName>
</protein>
<proteinExistence type="inferred from homology"/>
<accession>Q8K9A1</accession>
<sequence length="585" mass="65247">MNFDITRYPILSFAHSVRRLRLLSIEQLPQLCTELRKYLLDVVSITQGHFASGLGVIEITVALHYVYDTPFDNLLWDVGHQSYPHKILTGRAEKIGSIRKKNGLHPFPFREESKYDILSVGHSSTSISAGLGLSIAAGKEGKNRKTICVVGDGSMTAGMAFEAMNHAGIIQSDLLVVLNDNQMSISKNIGALNKHLKFLRDIKKSSKIFNFSIFESLNFKYLGPFDGHNIFKLIEIFKKTKDYRKTCLLHLITKKGKGYLPAELDPIKWHTISQSFSSSSKILTYSDVFGSWLCEIAEFDKKIMAITPAMCEGSGMLKFSRLFPNQYFDVAIAEQHAVTFAAGLAIAGYKPVVSIYSTFLQRAYDQIIHDVALQKLPVLFAIDRGGIVGHDGPTHQGIFDLSYLRCIPGIVIMTPSNENECRQMLYTGYMYKEGPSVVRYPKGKGIGMSLSPMKLIPLGKSLIKRVGEKIAILNFGALLQNAYLAAEKLNATLIDMRFVKPLDTNMILKLSLKYNFLVTIEEGVIAGGAGSAVNEFIMMRKILLPVLNIGLPDMFIAHGSQEEIKHDYQLDPEGIQNKILAWLSY</sequence>
<organism>
    <name type="scientific">Buchnera aphidicola subsp. Schizaphis graminum (strain Sg)</name>
    <dbReference type="NCBI Taxonomy" id="198804"/>
    <lineage>
        <taxon>Bacteria</taxon>
        <taxon>Pseudomonadati</taxon>
        <taxon>Pseudomonadota</taxon>
        <taxon>Gammaproteobacteria</taxon>
        <taxon>Enterobacterales</taxon>
        <taxon>Erwiniaceae</taxon>
        <taxon>Buchnera</taxon>
    </lineage>
</organism>
<evidence type="ECO:0000255" key="1">
    <source>
        <dbReference type="HAMAP-Rule" id="MF_00315"/>
    </source>
</evidence>
<evidence type="ECO:0000305" key="2"/>